<protein>
    <recommendedName>
        <fullName>Flagellin B1</fullName>
    </recommendedName>
    <alternativeName>
        <fullName>41 kDa flagellin</fullName>
    </alternativeName>
</protein>
<comment type="function">
    <text evidence="3">Flagellin is the subunit protein which polymerizes to form the filaments of archaeal flagella.</text>
</comment>
<comment type="subcellular location">
    <subcellularLocation>
        <location evidence="1">Archaeal flagellum</location>
    </subcellularLocation>
</comment>
<comment type="PTM">
    <text evidence="1">Glycosylated.</text>
</comment>
<comment type="miscellaneous">
    <text evidence="1">Flagellar filament preparations contain one major band with molecular weight of 41 kDa and several minor higher molecular weight bands; this is the protein sequence of the major band.</text>
</comment>
<comment type="similarity">
    <text evidence="2">Belongs to the archaeal flagellin family.</text>
</comment>
<accession>P57719</accession>
<organism>
    <name type="scientific">Thermoplasma volcanium (strain ATCC 51530 / DSM 4299 / JCM 9571 / NBRC 15438 / GSS1)</name>
    <dbReference type="NCBI Taxonomy" id="273116"/>
    <lineage>
        <taxon>Archaea</taxon>
        <taxon>Methanobacteriati</taxon>
        <taxon>Thermoplasmatota</taxon>
        <taxon>Thermoplasmata</taxon>
        <taxon>Thermoplasmatales</taxon>
        <taxon>Thermoplasmataceae</taxon>
        <taxon>Thermoplasma</taxon>
    </lineage>
</organism>
<gene>
    <name type="ordered locus">TV0607</name>
    <name type="ORF">TVG0598631</name>
</gene>
<reference key="1">
    <citation type="journal article" date="2000" name="Proc. Natl. Acad. Sci. U.S.A.">
        <title>Archaeal adaptation to higher temperatures revealed by genomic sequence of Thermoplasma volcanium.</title>
        <authorList>
            <person name="Kawashima T."/>
            <person name="Amano N."/>
            <person name="Koike H."/>
            <person name="Makino S."/>
            <person name="Higuchi S."/>
            <person name="Kawashima-Ohya Y."/>
            <person name="Watanabe K."/>
            <person name="Yamazaki M."/>
            <person name="Kanehori K."/>
            <person name="Kawamoto T."/>
            <person name="Nunoshiba T."/>
            <person name="Yamamoto Y."/>
            <person name="Aramaki H."/>
            <person name="Makino K."/>
            <person name="Suzuki M."/>
        </authorList>
    </citation>
    <scope>NUCLEOTIDE SEQUENCE [LARGE SCALE GENOMIC DNA]</scope>
    <source>
        <strain>ATCC 51530 / DSM 4299 / JCM 9571 / NBRC 15438 / GSS1</strain>
    </source>
</reference>
<reference key="2">
    <citation type="journal article" date="1996" name="J. Bacteriol.">
        <title>Isolation and characterization of flagella and flagellin proteins from the Thermoacidophilic archaea Thermoplasma volcanium and Sulfolobus shibatae.</title>
        <authorList>
            <person name="Faguy D.M."/>
            <person name="Bayley D.P."/>
            <person name="Kostyukova A.S."/>
            <person name="Thomas N.A."/>
            <person name="Jarrell K.F."/>
        </authorList>
    </citation>
    <scope>PROTEIN SEQUENCE OF 21-40</scope>
    <scope>FUNCTION</scope>
    <scope>SUBCELLULAR LOCATION</scope>
    <scope>GLYCOSYLATION</scope>
    <source>
        <strain>ATCC 51530 / DSM 4299 / JCM 9571 / NBRC 15438 / GSS1</strain>
    </source>
</reference>
<proteinExistence type="evidence at protein level"/>
<evidence type="ECO:0000269" key="1">
    <source>
    </source>
</evidence>
<evidence type="ECO:0000305" key="2"/>
<evidence type="ECO:0000305" key="3">
    <source>
    </source>
</evidence>
<feature type="propeptide" id="PRO_0000009419" evidence="1">
    <location>
        <begin position="1"/>
        <end position="20"/>
    </location>
</feature>
<feature type="chain" id="PRO_0000009420" description="Flagellin B1">
    <location>
        <begin position="21"/>
        <end position="247"/>
    </location>
</feature>
<feature type="sequence conflict" description="In Ref. 2; AA sequence." evidence="2" ref="2">
    <original>ET</original>
    <variation>GI</variation>
    <location>
        <begin position="21"/>
        <end position="22"/>
    </location>
</feature>
<dbReference type="EMBL" id="BA000011">
    <property type="protein sequence ID" value="BAB59749.1"/>
    <property type="molecule type" value="Genomic_DNA"/>
</dbReference>
<dbReference type="RefSeq" id="WP_010916865.1">
    <property type="nucleotide sequence ID" value="NC_002689.2"/>
</dbReference>
<dbReference type="SMR" id="P57719"/>
<dbReference type="STRING" id="273116.gene:9381395"/>
<dbReference type="PaxDb" id="273116-14324822"/>
<dbReference type="GeneID" id="1441713"/>
<dbReference type="KEGG" id="tvo:TVG0598631"/>
<dbReference type="eggNOG" id="arCOG01829">
    <property type="taxonomic scope" value="Archaea"/>
</dbReference>
<dbReference type="HOGENOM" id="CLU_051124_0_1_2"/>
<dbReference type="OrthoDB" id="102632at2157"/>
<dbReference type="PhylomeDB" id="P57719"/>
<dbReference type="Proteomes" id="UP000001017">
    <property type="component" value="Chromosome"/>
</dbReference>
<dbReference type="GO" id="GO:0097589">
    <property type="term" value="C:archaeal-type flagellum"/>
    <property type="evidence" value="ECO:0007669"/>
    <property type="project" value="UniProtKB-SubCell"/>
</dbReference>
<dbReference type="GO" id="GO:0005198">
    <property type="term" value="F:structural molecule activity"/>
    <property type="evidence" value="ECO:0007669"/>
    <property type="project" value="InterPro"/>
</dbReference>
<dbReference type="GO" id="GO:0097588">
    <property type="term" value="P:archaeal or bacterial-type flagellum-dependent cell motility"/>
    <property type="evidence" value="ECO:0007669"/>
    <property type="project" value="InterPro"/>
</dbReference>
<dbReference type="InterPro" id="IPR013373">
    <property type="entry name" value="Flagellin/pilin_N_arc"/>
</dbReference>
<dbReference type="InterPro" id="IPR002774">
    <property type="entry name" value="Flagellin_arc"/>
</dbReference>
<dbReference type="NCBIfam" id="TIGR02537">
    <property type="entry name" value="arch_flag_Nterm"/>
    <property type="match status" value="1"/>
</dbReference>
<dbReference type="NCBIfam" id="NF006325">
    <property type="entry name" value="PRK08541.1"/>
    <property type="match status" value="1"/>
</dbReference>
<dbReference type="PANTHER" id="PTHR35903">
    <property type="entry name" value="FLAGELLIN B1"/>
    <property type="match status" value="1"/>
</dbReference>
<dbReference type="PANTHER" id="PTHR35903:SF1">
    <property type="entry name" value="FLAGELLIN B1"/>
    <property type="match status" value="1"/>
</dbReference>
<dbReference type="Pfam" id="PF01917">
    <property type="entry name" value="Arch_flagellin"/>
    <property type="match status" value="1"/>
</dbReference>
<sequence>MNKLLRKVRKAFSLKADNKAETGIGTLIVFIAMVLVAAVAATVLVHTAGTLQQKATSTGSQTTQQVSTGIQVNSIYGLDSNKSVPTHGVIEWLAIQISITAGSSPINLANVTISLTYHGVSASLTYVGLENIGNATVTNDVYGFNSAVGGTNNVFNSSYFKTINGASNGSKHFAILVLSDPTNSMTAQYPVISYEDQVDLLVNVSAVFGGITEGQAVSGEVQAPVGSPGVIQFTAPESFVSDVIQLQ</sequence>
<name>FLA1_THEVO</name>
<keyword id="KW-0974">Archaeal flagellum</keyword>
<keyword id="KW-0903">Direct protein sequencing</keyword>
<keyword id="KW-0325">Glycoprotein</keyword>